<keyword id="KW-1185">Reference proteome</keyword>
<feature type="chain" id="PRO_1000044806" description="UPF0260 protein RPB_3505">
    <location>
        <begin position="1"/>
        <end position="170"/>
    </location>
</feature>
<sequence>MTAVPKKISPQDGFFWKTKTLEEMSQAEWESLCDGCARCCLEKLEDEDSGRIYFTHVGCRLLDGDACACHDYANRSERVPDCVRLTPENVRTLSWLPPSCGYRLVAEGRDLYWWHPLISGDPNTVHDAGVSVRGRVEATETEVSVEDLEDHIVSWPALLPRRAKLKKRPG</sequence>
<comment type="similarity">
    <text evidence="1">Belongs to the UPF0260 family.</text>
</comment>
<dbReference type="EMBL" id="CP000250">
    <property type="protein sequence ID" value="ABD08200.1"/>
    <property type="molecule type" value="Genomic_DNA"/>
</dbReference>
<dbReference type="RefSeq" id="WP_011442384.1">
    <property type="nucleotide sequence ID" value="NC_007778.1"/>
</dbReference>
<dbReference type="STRING" id="316058.RPB_3505"/>
<dbReference type="KEGG" id="rpb:RPB_3505"/>
<dbReference type="eggNOG" id="COG2983">
    <property type="taxonomic scope" value="Bacteria"/>
</dbReference>
<dbReference type="HOGENOM" id="CLU_109769_0_0_5"/>
<dbReference type="OrthoDB" id="9786855at2"/>
<dbReference type="Proteomes" id="UP000008809">
    <property type="component" value="Chromosome"/>
</dbReference>
<dbReference type="HAMAP" id="MF_00676">
    <property type="entry name" value="UPF0260"/>
    <property type="match status" value="1"/>
</dbReference>
<dbReference type="InterPro" id="IPR005358">
    <property type="entry name" value="Puta_zinc/iron-chelating_dom"/>
</dbReference>
<dbReference type="InterPro" id="IPR008228">
    <property type="entry name" value="UCP006173"/>
</dbReference>
<dbReference type="NCBIfam" id="NF003501">
    <property type="entry name" value="PRK05170.1-5"/>
    <property type="match status" value="1"/>
</dbReference>
<dbReference type="NCBIfam" id="NF003507">
    <property type="entry name" value="PRK05170.2-5"/>
    <property type="match status" value="1"/>
</dbReference>
<dbReference type="PANTHER" id="PTHR37421">
    <property type="entry name" value="UPF0260 PROTEIN YCGN"/>
    <property type="match status" value="1"/>
</dbReference>
<dbReference type="PANTHER" id="PTHR37421:SF1">
    <property type="entry name" value="UPF0260 PROTEIN YCGN"/>
    <property type="match status" value="1"/>
</dbReference>
<dbReference type="Pfam" id="PF03692">
    <property type="entry name" value="CxxCxxCC"/>
    <property type="match status" value="1"/>
</dbReference>
<dbReference type="PIRSF" id="PIRSF006173">
    <property type="entry name" value="UCP006173"/>
    <property type="match status" value="1"/>
</dbReference>
<evidence type="ECO:0000255" key="1">
    <source>
        <dbReference type="HAMAP-Rule" id="MF_00676"/>
    </source>
</evidence>
<gene>
    <name type="ordered locus">RPB_3505</name>
</gene>
<reference key="1">
    <citation type="submission" date="2006-01" db="EMBL/GenBank/DDBJ databases">
        <title>Complete sequence of Rhodopseudomonas palustris HaA2.</title>
        <authorList>
            <consortium name="US DOE Joint Genome Institute"/>
            <person name="Copeland A."/>
            <person name="Lucas S."/>
            <person name="Lapidus A."/>
            <person name="Barry K."/>
            <person name="Detter J.C."/>
            <person name="Glavina T."/>
            <person name="Hammon N."/>
            <person name="Israni S."/>
            <person name="Pitluck S."/>
            <person name="Chain P."/>
            <person name="Malfatti S."/>
            <person name="Shin M."/>
            <person name="Vergez L."/>
            <person name="Schmutz J."/>
            <person name="Larimer F."/>
            <person name="Land M."/>
            <person name="Hauser L."/>
            <person name="Pelletier D.A."/>
            <person name="Kyrpides N."/>
            <person name="Anderson I."/>
            <person name="Oda Y."/>
            <person name="Harwood C.S."/>
            <person name="Richardson P."/>
        </authorList>
    </citation>
    <scope>NUCLEOTIDE SEQUENCE [LARGE SCALE GENOMIC DNA]</scope>
    <source>
        <strain>HaA2</strain>
    </source>
</reference>
<accession>Q2IUB0</accession>
<organism>
    <name type="scientific">Rhodopseudomonas palustris (strain HaA2)</name>
    <dbReference type="NCBI Taxonomy" id="316058"/>
    <lineage>
        <taxon>Bacteria</taxon>
        <taxon>Pseudomonadati</taxon>
        <taxon>Pseudomonadota</taxon>
        <taxon>Alphaproteobacteria</taxon>
        <taxon>Hyphomicrobiales</taxon>
        <taxon>Nitrobacteraceae</taxon>
        <taxon>Rhodopseudomonas</taxon>
    </lineage>
</organism>
<name>Y3505_RHOP2</name>
<protein>
    <recommendedName>
        <fullName evidence="1">UPF0260 protein RPB_3505</fullName>
    </recommendedName>
</protein>
<proteinExistence type="inferred from homology"/>